<evidence type="ECO:0000255" key="1">
    <source>
        <dbReference type="HAMAP-Rule" id="MF_00101"/>
    </source>
</evidence>
<organism>
    <name type="scientific">Anoxybacillus flavithermus (strain DSM 21510 / WK1)</name>
    <dbReference type="NCBI Taxonomy" id="491915"/>
    <lineage>
        <taxon>Bacteria</taxon>
        <taxon>Bacillati</taxon>
        <taxon>Bacillota</taxon>
        <taxon>Bacilli</taxon>
        <taxon>Bacillales</taxon>
        <taxon>Anoxybacillaceae</taxon>
        <taxon>Anoxybacillus</taxon>
    </lineage>
</organism>
<feature type="chain" id="PRO_1000117340" description="Holo-[acyl-carrier-protein] synthase">
    <location>
        <begin position="1"/>
        <end position="120"/>
    </location>
</feature>
<feature type="binding site" evidence="1">
    <location>
        <position position="8"/>
    </location>
    <ligand>
        <name>Mg(2+)</name>
        <dbReference type="ChEBI" id="CHEBI:18420"/>
    </ligand>
</feature>
<feature type="binding site" evidence="1">
    <location>
        <position position="58"/>
    </location>
    <ligand>
        <name>Mg(2+)</name>
        <dbReference type="ChEBI" id="CHEBI:18420"/>
    </ligand>
</feature>
<comment type="function">
    <text evidence="1">Transfers the 4'-phosphopantetheine moiety from coenzyme A to a Ser of acyl-carrier-protein.</text>
</comment>
<comment type="catalytic activity">
    <reaction evidence="1">
        <text>apo-[ACP] + CoA = holo-[ACP] + adenosine 3',5'-bisphosphate + H(+)</text>
        <dbReference type="Rhea" id="RHEA:12068"/>
        <dbReference type="Rhea" id="RHEA-COMP:9685"/>
        <dbReference type="Rhea" id="RHEA-COMP:9690"/>
        <dbReference type="ChEBI" id="CHEBI:15378"/>
        <dbReference type="ChEBI" id="CHEBI:29999"/>
        <dbReference type="ChEBI" id="CHEBI:57287"/>
        <dbReference type="ChEBI" id="CHEBI:58343"/>
        <dbReference type="ChEBI" id="CHEBI:64479"/>
        <dbReference type="EC" id="2.7.8.7"/>
    </reaction>
</comment>
<comment type="cofactor">
    <cofactor evidence="1">
        <name>Mg(2+)</name>
        <dbReference type="ChEBI" id="CHEBI:18420"/>
    </cofactor>
</comment>
<comment type="subcellular location">
    <subcellularLocation>
        <location evidence="1">Cytoplasm</location>
    </subcellularLocation>
</comment>
<comment type="similarity">
    <text evidence="1">Belongs to the P-Pant transferase superfamily. AcpS family.</text>
</comment>
<dbReference type="EC" id="2.7.8.7" evidence="1"/>
<dbReference type="EMBL" id="CP000922">
    <property type="protein sequence ID" value="ACJ32579.1"/>
    <property type="molecule type" value="Genomic_DNA"/>
</dbReference>
<dbReference type="RefSeq" id="WP_012573924.1">
    <property type="nucleotide sequence ID" value="NC_011567.1"/>
</dbReference>
<dbReference type="SMR" id="B7GIY1"/>
<dbReference type="STRING" id="491915.Aflv_0195"/>
<dbReference type="GeneID" id="7036408"/>
<dbReference type="KEGG" id="afl:Aflv_0195"/>
<dbReference type="PATRIC" id="fig|491915.6.peg.198"/>
<dbReference type="eggNOG" id="COG0736">
    <property type="taxonomic scope" value="Bacteria"/>
</dbReference>
<dbReference type="HOGENOM" id="CLU_089696_1_2_9"/>
<dbReference type="Proteomes" id="UP000000742">
    <property type="component" value="Chromosome"/>
</dbReference>
<dbReference type="GO" id="GO:0005829">
    <property type="term" value="C:cytosol"/>
    <property type="evidence" value="ECO:0007669"/>
    <property type="project" value="TreeGrafter"/>
</dbReference>
<dbReference type="GO" id="GO:0008897">
    <property type="term" value="F:holo-[acyl-carrier-protein] synthase activity"/>
    <property type="evidence" value="ECO:0007669"/>
    <property type="project" value="UniProtKB-UniRule"/>
</dbReference>
<dbReference type="GO" id="GO:0000287">
    <property type="term" value="F:magnesium ion binding"/>
    <property type="evidence" value="ECO:0007669"/>
    <property type="project" value="UniProtKB-UniRule"/>
</dbReference>
<dbReference type="GO" id="GO:0006633">
    <property type="term" value="P:fatty acid biosynthetic process"/>
    <property type="evidence" value="ECO:0007669"/>
    <property type="project" value="UniProtKB-UniRule"/>
</dbReference>
<dbReference type="GO" id="GO:0019878">
    <property type="term" value="P:lysine biosynthetic process via aminoadipic acid"/>
    <property type="evidence" value="ECO:0007669"/>
    <property type="project" value="TreeGrafter"/>
</dbReference>
<dbReference type="Gene3D" id="3.90.470.20">
    <property type="entry name" value="4'-phosphopantetheinyl transferase domain"/>
    <property type="match status" value="1"/>
</dbReference>
<dbReference type="HAMAP" id="MF_00101">
    <property type="entry name" value="AcpS"/>
    <property type="match status" value="1"/>
</dbReference>
<dbReference type="InterPro" id="IPR008278">
    <property type="entry name" value="4-PPantetheinyl_Trfase_dom"/>
</dbReference>
<dbReference type="InterPro" id="IPR037143">
    <property type="entry name" value="4-PPantetheinyl_Trfase_dom_sf"/>
</dbReference>
<dbReference type="InterPro" id="IPR002582">
    <property type="entry name" value="ACPS"/>
</dbReference>
<dbReference type="InterPro" id="IPR050559">
    <property type="entry name" value="P-Pant_transferase_sf"/>
</dbReference>
<dbReference type="InterPro" id="IPR004568">
    <property type="entry name" value="Ppantetheine-prot_Trfase_dom"/>
</dbReference>
<dbReference type="NCBIfam" id="TIGR00516">
    <property type="entry name" value="acpS"/>
    <property type="match status" value="1"/>
</dbReference>
<dbReference type="NCBIfam" id="TIGR00556">
    <property type="entry name" value="pantethn_trn"/>
    <property type="match status" value="1"/>
</dbReference>
<dbReference type="PANTHER" id="PTHR12215:SF10">
    <property type="entry name" value="L-AMINOADIPATE-SEMIALDEHYDE DEHYDROGENASE-PHOSPHOPANTETHEINYL TRANSFERASE"/>
    <property type="match status" value="1"/>
</dbReference>
<dbReference type="PANTHER" id="PTHR12215">
    <property type="entry name" value="PHOSPHOPANTETHEINE TRANSFERASE"/>
    <property type="match status" value="1"/>
</dbReference>
<dbReference type="Pfam" id="PF01648">
    <property type="entry name" value="ACPS"/>
    <property type="match status" value="1"/>
</dbReference>
<dbReference type="SUPFAM" id="SSF56214">
    <property type="entry name" value="4'-phosphopantetheinyl transferase"/>
    <property type="match status" value="1"/>
</dbReference>
<name>ACPS_ANOFW</name>
<sequence>MIVGIGIDIVELHRVAELMERQPKFIERILTDNEHIRFQQLSSKRKIEFVAGRFAAKEAYAKALGTGIGTHVSFHDIEIKNDENGKPYIISPSMDERVHVSISHSEHYAVAQVIIERLSS</sequence>
<keyword id="KW-0963">Cytoplasm</keyword>
<keyword id="KW-0275">Fatty acid biosynthesis</keyword>
<keyword id="KW-0276">Fatty acid metabolism</keyword>
<keyword id="KW-0444">Lipid biosynthesis</keyword>
<keyword id="KW-0443">Lipid metabolism</keyword>
<keyword id="KW-0460">Magnesium</keyword>
<keyword id="KW-0479">Metal-binding</keyword>
<keyword id="KW-0808">Transferase</keyword>
<reference key="1">
    <citation type="journal article" date="2008" name="Genome Biol.">
        <title>Encapsulated in silica: genome, proteome and physiology of the thermophilic bacterium Anoxybacillus flavithermus WK1.</title>
        <authorList>
            <person name="Saw J.H."/>
            <person name="Mountain B.W."/>
            <person name="Feng L."/>
            <person name="Omelchenko M.V."/>
            <person name="Hou S."/>
            <person name="Saito J.A."/>
            <person name="Stott M.B."/>
            <person name="Li D."/>
            <person name="Zhao G."/>
            <person name="Wu J."/>
            <person name="Galperin M.Y."/>
            <person name="Koonin E.V."/>
            <person name="Makarova K.S."/>
            <person name="Wolf Y.I."/>
            <person name="Rigden D.J."/>
            <person name="Dunfield P.F."/>
            <person name="Wang L."/>
            <person name="Alam M."/>
        </authorList>
    </citation>
    <scope>NUCLEOTIDE SEQUENCE [LARGE SCALE GENOMIC DNA]</scope>
    <source>
        <strain>DSM 21510 / WK1</strain>
    </source>
</reference>
<accession>B7GIY1</accession>
<protein>
    <recommendedName>
        <fullName evidence="1">Holo-[acyl-carrier-protein] synthase</fullName>
        <shortName evidence="1">Holo-ACP synthase</shortName>
        <ecNumber evidence="1">2.7.8.7</ecNumber>
    </recommendedName>
    <alternativeName>
        <fullName evidence="1">4'-phosphopantetheinyl transferase AcpS</fullName>
    </alternativeName>
</protein>
<proteinExistence type="inferred from homology"/>
<gene>
    <name evidence="1" type="primary">acpS</name>
    <name type="ordered locus">Aflv_0195</name>
</gene>